<keyword id="KW-0028">Amino-acid biosynthesis</keyword>
<keyword id="KW-0057">Aromatic amino acid biosynthesis</keyword>
<keyword id="KW-0274">FAD</keyword>
<keyword id="KW-0285">Flavoprotein</keyword>
<keyword id="KW-0288">FMN</keyword>
<keyword id="KW-0456">Lyase</keyword>
<keyword id="KW-0521">NADP</keyword>
<keyword id="KW-1185">Reference proteome</keyword>
<accession>A7MH70</accession>
<reference key="1">
    <citation type="journal article" date="2010" name="PLoS ONE">
        <title>Genome sequence of Cronobacter sakazakii BAA-894 and comparative genomic hybridization analysis with other Cronobacter species.</title>
        <authorList>
            <person name="Kucerova E."/>
            <person name="Clifton S.W."/>
            <person name="Xia X.Q."/>
            <person name="Long F."/>
            <person name="Porwollik S."/>
            <person name="Fulton L."/>
            <person name="Fronick C."/>
            <person name="Minx P."/>
            <person name="Kyung K."/>
            <person name="Warren W."/>
            <person name="Fulton R."/>
            <person name="Feng D."/>
            <person name="Wollam A."/>
            <person name="Shah N."/>
            <person name="Bhonagiri V."/>
            <person name="Nash W.E."/>
            <person name="Hallsworth-Pepin K."/>
            <person name="Wilson R.K."/>
            <person name="McClelland M."/>
            <person name="Forsythe S.J."/>
        </authorList>
    </citation>
    <scope>NUCLEOTIDE SEQUENCE [LARGE SCALE GENOMIC DNA]</scope>
    <source>
        <strain>ATCC BAA-894</strain>
    </source>
</reference>
<name>AROC_CROS8</name>
<gene>
    <name evidence="1" type="primary">aroC</name>
    <name type="ordered locus">ESA_00886</name>
</gene>
<dbReference type="EC" id="4.2.3.5" evidence="1"/>
<dbReference type="EMBL" id="CP000783">
    <property type="protein sequence ID" value="ABU76156.1"/>
    <property type="molecule type" value="Genomic_DNA"/>
</dbReference>
<dbReference type="RefSeq" id="WP_012124137.1">
    <property type="nucleotide sequence ID" value="NC_009778.1"/>
</dbReference>
<dbReference type="SMR" id="A7MH70"/>
<dbReference type="KEGG" id="esa:ESA_00886"/>
<dbReference type="PATRIC" id="fig|290339.8.peg.786"/>
<dbReference type="HOGENOM" id="CLU_034547_0_2_6"/>
<dbReference type="UniPathway" id="UPA00053">
    <property type="reaction ID" value="UER00090"/>
</dbReference>
<dbReference type="Proteomes" id="UP000000260">
    <property type="component" value="Chromosome"/>
</dbReference>
<dbReference type="GO" id="GO:0005829">
    <property type="term" value="C:cytosol"/>
    <property type="evidence" value="ECO:0007669"/>
    <property type="project" value="TreeGrafter"/>
</dbReference>
<dbReference type="GO" id="GO:0004107">
    <property type="term" value="F:chorismate synthase activity"/>
    <property type="evidence" value="ECO:0007669"/>
    <property type="project" value="UniProtKB-UniRule"/>
</dbReference>
<dbReference type="GO" id="GO:0010181">
    <property type="term" value="F:FMN binding"/>
    <property type="evidence" value="ECO:0007669"/>
    <property type="project" value="TreeGrafter"/>
</dbReference>
<dbReference type="GO" id="GO:0008652">
    <property type="term" value="P:amino acid biosynthetic process"/>
    <property type="evidence" value="ECO:0007669"/>
    <property type="project" value="UniProtKB-KW"/>
</dbReference>
<dbReference type="GO" id="GO:0009073">
    <property type="term" value="P:aromatic amino acid family biosynthetic process"/>
    <property type="evidence" value="ECO:0007669"/>
    <property type="project" value="UniProtKB-KW"/>
</dbReference>
<dbReference type="GO" id="GO:0009423">
    <property type="term" value="P:chorismate biosynthetic process"/>
    <property type="evidence" value="ECO:0007669"/>
    <property type="project" value="UniProtKB-UniRule"/>
</dbReference>
<dbReference type="CDD" id="cd07304">
    <property type="entry name" value="Chorismate_synthase"/>
    <property type="match status" value="1"/>
</dbReference>
<dbReference type="FunFam" id="3.60.150.10:FF:000001">
    <property type="entry name" value="Chorismate synthase"/>
    <property type="match status" value="1"/>
</dbReference>
<dbReference type="Gene3D" id="3.60.150.10">
    <property type="entry name" value="Chorismate synthase AroC"/>
    <property type="match status" value="1"/>
</dbReference>
<dbReference type="HAMAP" id="MF_00300">
    <property type="entry name" value="Chorismate_synth"/>
    <property type="match status" value="1"/>
</dbReference>
<dbReference type="InterPro" id="IPR000453">
    <property type="entry name" value="Chorismate_synth"/>
</dbReference>
<dbReference type="InterPro" id="IPR035904">
    <property type="entry name" value="Chorismate_synth_AroC_sf"/>
</dbReference>
<dbReference type="InterPro" id="IPR020541">
    <property type="entry name" value="Chorismate_synthase_CS"/>
</dbReference>
<dbReference type="NCBIfam" id="TIGR00033">
    <property type="entry name" value="aroC"/>
    <property type="match status" value="1"/>
</dbReference>
<dbReference type="NCBIfam" id="NF003793">
    <property type="entry name" value="PRK05382.1"/>
    <property type="match status" value="1"/>
</dbReference>
<dbReference type="PANTHER" id="PTHR21085">
    <property type="entry name" value="CHORISMATE SYNTHASE"/>
    <property type="match status" value="1"/>
</dbReference>
<dbReference type="PANTHER" id="PTHR21085:SF0">
    <property type="entry name" value="CHORISMATE SYNTHASE"/>
    <property type="match status" value="1"/>
</dbReference>
<dbReference type="Pfam" id="PF01264">
    <property type="entry name" value="Chorismate_synt"/>
    <property type="match status" value="1"/>
</dbReference>
<dbReference type="PIRSF" id="PIRSF001456">
    <property type="entry name" value="Chorismate_synth"/>
    <property type="match status" value="1"/>
</dbReference>
<dbReference type="SUPFAM" id="SSF103263">
    <property type="entry name" value="Chorismate synthase, AroC"/>
    <property type="match status" value="1"/>
</dbReference>
<dbReference type="PROSITE" id="PS00787">
    <property type="entry name" value="CHORISMATE_SYNTHASE_1"/>
    <property type="match status" value="1"/>
</dbReference>
<dbReference type="PROSITE" id="PS00788">
    <property type="entry name" value="CHORISMATE_SYNTHASE_2"/>
    <property type="match status" value="1"/>
</dbReference>
<dbReference type="PROSITE" id="PS00789">
    <property type="entry name" value="CHORISMATE_SYNTHASE_3"/>
    <property type="match status" value="1"/>
</dbReference>
<organism>
    <name type="scientific">Cronobacter sakazakii (strain ATCC BAA-894)</name>
    <name type="common">Enterobacter sakazakii</name>
    <dbReference type="NCBI Taxonomy" id="290339"/>
    <lineage>
        <taxon>Bacteria</taxon>
        <taxon>Pseudomonadati</taxon>
        <taxon>Pseudomonadota</taxon>
        <taxon>Gammaproteobacteria</taxon>
        <taxon>Enterobacterales</taxon>
        <taxon>Enterobacteriaceae</taxon>
        <taxon>Cronobacter</taxon>
    </lineage>
</organism>
<comment type="function">
    <text evidence="1">Catalyzes the anti-1,4-elimination of the C-3 phosphate and the C-6 proR hydrogen from 5-enolpyruvylshikimate-3-phosphate (EPSP) to yield chorismate, which is the branch point compound that serves as the starting substrate for the three terminal pathways of aromatic amino acid biosynthesis. This reaction introduces a second double bond into the aromatic ring system.</text>
</comment>
<comment type="catalytic activity">
    <reaction evidence="1">
        <text>5-O-(1-carboxyvinyl)-3-phosphoshikimate = chorismate + phosphate</text>
        <dbReference type="Rhea" id="RHEA:21020"/>
        <dbReference type="ChEBI" id="CHEBI:29748"/>
        <dbReference type="ChEBI" id="CHEBI:43474"/>
        <dbReference type="ChEBI" id="CHEBI:57701"/>
        <dbReference type="EC" id="4.2.3.5"/>
    </reaction>
</comment>
<comment type="cofactor">
    <cofactor evidence="1">
        <name>FMNH2</name>
        <dbReference type="ChEBI" id="CHEBI:57618"/>
    </cofactor>
    <text evidence="1">Reduced FMN (FMNH(2)).</text>
</comment>
<comment type="pathway">
    <text evidence="1">Metabolic intermediate biosynthesis; chorismate biosynthesis; chorismate from D-erythrose 4-phosphate and phosphoenolpyruvate: step 7/7.</text>
</comment>
<comment type="subunit">
    <text evidence="1">Homotetramer.</text>
</comment>
<comment type="similarity">
    <text evidence="1">Belongs to the chorismate synthase family.</text>
</comment>
<feature type="chain" id="PRO_1000022485" description="Chorismate synthase">
    <location>
        <begin position="1"/>
        <end position="361"/>
    </location>
</feature>
<feature type="binding site" evidence="1">
    <location>
        <position position="48"/>
    </location>
    <ligand>
        <name>NADP(+)</name>
        <dbReference type="ChEBI" id="CHEBI:58349"/>
    </ligand>
</feature>
<feature type="binding site" evidence="1">
    <location>
        <position position="54"/>
    </location>
    <ligand>
        <name>NADP(+)</name>
        <dbReference type="ChEBI" id="CHEBI:58349"/>
    </ligand>
</feature>
<feature type="binding site" evidence="1">
    <location>
        <begin position="125"/>
        <end position="127"/>
    </location>
    <ligand>
        <name>FMN</name>
        <dbReference type="ChEBI" id="CHEBI:58210"/>
    </ligand>
</feature>
<feature type="binding site" evidence="1">
    <location>
        <begin position="238"/>
        <end position="239"/>
    </location>
    <ligand>
        <name>FMN</name>
        <dbReference type="ChEBI" id="CHEBI:58210"/>
    </ligand>
</feature>
<feature type="binding site" evidence="1">
    <location>
        <position position="278"/>
    </location>
    <ligand>
        <name>FMN</name>
        <dbReference type="ChEBI" id="CHEBI:58210"/>
    </ligand>
</feature>
<feature type="binding site" evidence="1">
    <location>
        <begin position="293"/>
        <end position="297"/>
    </location>
    <ligand>
        <name>FMN</name>
        <dbReference type="ChEBI" id="CHEBI:58210"/>
    </ligand>
</feature>
<feature type="binding site" evidence="1">
    <location>
        <position position="319"/>
    </location>
    <ligand>
        <name>FMN</name>
        <dbReference type="ChEBI" id="CHEBI:58210"/>
    </ligand>
</feature>
<protein>
    <recommendedName>
        <fullName evidence="1">Chorismate synthase</fullName>
        <shortName evidence="1">CS</shortName>
        <ecNumber evidence="1">4.2.3.5</ecNumber>
    </recommendedName>
    <alternativeName>
        <fullName evidence="1">5-enolpyruvylshikimate-3-phosphate phospholyase</fullName>
    </alternativeName>
</protein>
<sequence length="361" mass="39091">MAGNTLGQLFRVTTFGESHGLALGCIIDGVPPGIALSEADLQHDLDRRRPGTSRYTTQRREPDQVKILSGVFEGVTTGTSIGLLIENTDQRSQDYSAIKDVFRPGHADYTYEQKYGLRDYRGGGRSSARETAMRVAAGAIAKKYLAQKFGIVIRACLTQMGDIPLEIKDWAQVEQNPFFSPDVDKLEALDELMRALKKEGDSIGAKVTVVADNVPPGLGEPVFDRLDADIAHALMSINAVKGVEIGEGFGVVALKGSENRDEITKEGFQSNHAGGILGGISSGQQIVANIALKPTSSITVPGRTVNRFGEEVEMITRGRHDPCVGIRAVPIAEAMMAIVLMDHLLRHRAQNADVTTTLPRW</sequence>
<proteinExistence type="inferred from homology"/>
<evidence type="ECO:0000255" key="1">
    <source>
        <dbReference type="HAMAP-Rule" id="MF_00300"/>
    </source>
</evidence>